<organism>
    <name type="scientific">Rattus norvegicus</name>
    <name type="common">Rat</name>
    <dbReference type="NCBI Taxonomy" id="10116"/>
    <lineage>
        <taxon>Eukaryota</taxon>
        <taxon>Metazoa</taxon>
        <taxon>Chordata</taxon>
        <taxon>Craniata</taxon>
        <taxon>Vertebrata</taxon>
        <taxon>Euteleostomi</taxon>
        <taxon>Mammalia</taxon>
        <taxon>Eutheria</taxon>
        <taxon>Euarchontoglires</taxon>
        <taxon>Glires</taxon>
        <taxon>Rodentia</taxon>
        <taxon>Myomorpha</taxon>
        <taxon>Muroidea</taxon>
        <taxon>Muridae</taxon>
        <taxon>Murinae</taxon>
        <taxon>Rattus</taxon>
    </lineage>
</organism>
<proteinExistence type="evidence at protein level"/>
<comment type="function">
    <text evidence="2">Catalyzes the conjugation of glutathione to a large variety of electrophilic compounds.</text>
</comment>
<comment type="catalytic activity">
    <reaction evidence="2">
        <text>RX + glutathione = an S-substituted glutathione + a halide anion + H(+)</text>
        <dbReference type="Rhea" id="RHEA:16437"/>
        <dbReference type="ChEBI" id="CHEBI:15378"/>
        <dbReference type="ChEBI" id="CHEBI:16042"/>
        <dbReference type="ChEBI" id="CHEBI:17792"/>
        <dbReference type="ChEBI" id="CHEBI:57925"/>
        <dbReference type="ChEBI" id="CHEBI:90779"/>
        <dbReference type="EC" id="2.5.1.18"/>
    </reaction>
    <physiologicalReaction direction="left-to-right" evidence="2">
        <dbReference type="Rhea" id="RHEA:16438"/>
    </physiologicalReaction>
</comment>
<comment type="subunit">
    <text evidence="1">Homodimer or heterodimer of GSTA1 and GSTA2.</text>
</comment>
<comment type="subcellular location">
    <subcellularLocation>
        <location>Cytoplasm</location>
    </subcellularLocation>
</comment>
<comment type="miscellaneous">
    <text>In addition to its enzymatic activity, the homodimer of Ya chains, called ligandin, binds various organic anions, xenobiotics, and azocarcinogen dyes.</text>
</comment>
<comment type="similarity">
    <text evidence="6">Belongs to the GST superfamily. Alpha family.</text>
</comment>
<reference key="1">
    <citation type="journal article" date="1984" name="J. Biol. Chem.">
        <title>Rat liver glutathione S-transferases. Complete nucleotide sequence of a glutathione S-transferase mRNA and the regulation of the Ya, Yb, and Yc mRNAs by 3-methylcholanthrene and phenobarbital.</title>
        <authorList>
            <person name="Pickett C.B."/>
            <person name="Telakowski-Hopkins C.A."/>
            <person name="Ding G.J.-F."/>
            <person name="Argenbright L."/>
            <person name="Lu A.Y.H."/>
        </authorList>
    </citation>
    <scope>NUCLEOTIDE SEQUENCE [MRNA]</scope>
    <source>
        <strain>Sprague-Dawley</strain>
        <tissue>Liver</tissue>
    </source>
</reference>
<reference key="2">
    <citation type="journal article" date="1986" name="Adv. Exp. Med. Biol.">
        <title>Expression and sequence analysis of rat liver glutathione S-transferase genes.</title>
        <authorList>
            <person name="Pickett C.B."/>
            <person name="Telakowsi-Hopkins C.A."/>
            <person name="Ding G.J.-F."/>
            <person name="Ding V.D.-H."/>
        </authorList>
    </citation>
    <scope>NUCLEOTIDE SEQUENCE [MRNA]</scope>
</reference>
<reference key="3">
    <citation type="journal article" date="1986" name="Proc. Natl. Acad. Sci. U.S.A.">
        <title>Structural analysis of a rat liver glutathione S-transferase Ya gene.</title>
        <authorList>
            <person name="Telakowski-Hopkins C.A."/>
            <person name="Rothkopf G.S."/>
            <person name="Pickett C.B."/>
        </authorList>
    </citation>
    <scope>NUCLEOTIDE SEQUENCE [GENOMIC DNA]</scope>
</reference>
<reference key="4">
    <citation type="journal article" date="1984" name="Biochem. J.">
        <title>Construction and characterization of a plasmid containing complementary DNA to mRNA encoding the N-terminal amino acid sequence of the rat glutathione transferase Ya subunit.</title>
        <authorList>
            <person name="Taylor J.B."/>
            <person name="Craig R.K."/>
            <person name="Beale D."/>
            <person name="Ketterer B."/>
        </authorList>
    </citation>
    <scope>NUCLEOTIDE SEQUENCE [MRNA] OF 1-129</scope>
</reference>
<reference key="5">
    <citation type="journal article" date="1989" name="Arch. Biochem. Biophys.">
        <title>Expression of a cDNA encoding a rat liver glutathione S-transferase Ya subunit in Escherichia coli.</title>
        <authorList>
            <person name="Wang R.W."/>
            <person name="Pickett C.B."/>
            <person name="Lu A.Y.H."/>
        </authorList>
    </citation>
    <scope>NUCLEOTIDE SEQUENCE [MRNA] OF 1-31</scope>
    <source>
        <tissue>Liver</tissue>
    </source>
</reference>
<reference key="6">
    <citation type="journal article" date="1982" name="Nucleic Acids Res.">
        <title>Cloning and sequence analysis of a cDNA plasmid for one of the rat liver glutathione S-transferase subunits.</title>
        <authorList>
            <person name="Tu C.-P.D."/>
            <person name="Weiss M.J."/>
            <person name="Karakawa W.W."/>
            <person name="Reddy C.C."/>
        </authorList>
    </citation>
    <scope>NUCLEOTIDE SEQUENCE [MRNA] OF 81-222</scope>
</reference>
<sequence>MSGKPVLHYFNARGRMECIRWLLAAAGVEFEEKLIQSPEDLEKLKKDGNLMFDQVPMVEIDGMKLAQTRAILNYIATKYDLYGKDMKERALIDMYSEGILDLTEMIIQLVICPPDQREAKTALAKDRTKNRYLPAFEKVLKSHGQDYLVGNRLTRVDIHLLELLLYVEEFDASLLTSFPLLKAFKSRISSLPNVKKFLQPGSQRKPAMDAKQIEEARKVFKF</sequence>
<dbReference type="EC" id="2.5.1.18" evidence="2"/>
<dbReference type="EMBL" id="K00136">
    <property type="protein sequence ID" value="AAA41282.1"/>
    <property type="molecule type" value="mRNA"/>
</dbReference>
<dbReference type="EMBL" id="M25891">
    <property type="protein sequence ID" value="AAA41290.1"/>
    <property type="molecule type" value="mRNA"/>
</dbReference>
<dbReference type="EMBL" id="M14991">
    <property type="protein sequence ID" value="AAA41295.1"/>
    <property type="molecule type" value="Genomic_DNA"/>
</dbReference>
<dbReference type="EMBL" id="M14986">
    <property type="protein sequence ID" value="AAA41295.1"/>
    <property type="status" value="JOINED"/>
    <property type="molecule type" value="Genomic_DNA"/>
</dbReference>
<dbReference type="EMBL" id="M14987">
    <property type="protein sequence ID" value="AAA41295.1"/>
    <property type="status" value="JOINED"/>
    <property type="molecule type" value="Genomic_DNA"/>
</dbReference>
<dbReference type="EMBL" id="M14988">
    <property type="protein sequence ID" value="AAA41295.1"/>
    <property type="status" value="JOINED"/>
    <property type="molecule type" value="Genomic_DNA"/>
</dbReference>
<dbReference type="EMBL" id="M14989">
    <property type="protein sequence ID" value="AAA41295.1"/>
    <property type="status" value="JOINED"/>
    <property type="molecule type" value="Genomic_DNA"/>
</dbReference>
<dbReference type="EMBL" id="M14990">
    <property type="protein sequence ID" value="AAA41295.1"/>
    <property type="status" value="JOINED"/>
    <property type="molecule type" value="Genomic_DNA"/>
</dbReference>
<dbReference type="EMBL" id="X00520">
    <property type="protein sequence ID" value="CAA25203.1"/>
    <property type="molecule type" value="mRNA"/>
</dbReference>
<dbReference type="EMBL" id="M27446">
    <property type="protein sequence ID" value="AAA41291.1"/>
    <property type="molecule type" value="mRNA"/>
</dbReference>
<dbReference type="PIR" id="A24735">
    <property type="entry name" value="A24735"/>
</dbReference>
<dbReference type="PIR" id="A26653">
    <property type="entry name" value="A26653"/>
</dbReference>
<dbReference type="PIR" id="A92479">
    <property type="entry name" value="XURTG"/>
</dbReference>
<dbReference type="RefSeq" id="NP_001010921.1">
    <property type="nucleotide sequence ID" value="NM_001010921.1"/>
</dbReference>
<dbReference type="PDB" id="5LCZ">
    <property type="method" value="X-ray"/>
    <property type="resolution" value="2.33 A"/>
    <property type="chains" value="A/B=54-65, A/B=86-213"/>
</dbReference>
<dbReference type="PDB" id="5LD0">
    <property type="method" value="X-ray"/>
    <property type="resolution" value="1.60 A"/>
    <property type="chains" value="A=86-213"/>
</dbReference>
<dbReference type="PDBsum" id="5LCZ"/>
<dbReference type="PDBsum" id="5LD0"/>
<dbReference type="SMR" id="P04903"/>
<dbReference type="BioGRID" id="268945">
    <property type="interactions" value="1"/>
</dbReference>
<dbReference type="FunCoup" id="P04903">
    <property type="interactions" value="143"/>
</dbReference>
<dbReference type="STRING" id="10116.ENSRNOP00000043510"/>
<dbReference type="CarbonylDB" id="P04903"/>
<dbReference type="PaxDb" id="10116-ENSRNOP00000043510"/>
<dbReference type="GeneID" id="494499"/>
<dbReference type="KEGG" id="rno:494499"/>
<dbReference type="UCSC" id="RGD:2754">
    <property type="organism name" value="rat"/>
</dbReference>
<dbReference type="AGR" id="RGD:1593189"/>
<dbReference type="CTD" id="221357"/>
<dbReference type="RGD" id="2754">
    <property type="gene designation" value="Gsta2"/>
</dbReference>
<dbReference type="eggNOG" id="KOG1695">
    <property type="taxonomic scope" value="Eukaryota"/>
</dbReference>
<dbReference type="InParanoid" id="P04903"/>
<dbReference type="OrthoDB" id="414243at2759"/>
<dbReference type="PhylomeDB" id="P04903"/>
<dbReference type="BRENDA" id="2.5.1.18">
    <property type="organism ID" value="5301"/>
</dbReference>
<dbReference type="Reactome" id="R-RNO-156590">
    <property type="pathway name" value="Glutathione conjugation"/>
</dbReference>
<dbReference type="Reactome" id="R-RNO-189483">
    <property type="pathway name" value="Heme degradation"/>
</dbReference>
<dbReference type="Reactome" id="R-RNO-9748787">
    <property type="pathway name" value="Azathioprine ADME"/>
</dbReference>
<dbReference type="PRO" id="PR:P04903"/>
<dbReference type="Proteomes" id="UP000002494">
    <property type="component" value="Unplaced"/>
</dbReference>
<dbReference type="GO" id="GO:0005829">
    <property type="term" value="C:cytosol"/>
    <property type="evidence" value="ECO:0000314"/>
    <property type="project" value="CAFA"/>
</dbReference>
<dbReference type="GO" id="GO:0005739">
    <property type="term" value="C:mitochondrion"/>
    <property type="evidence" value="ECO:0000266"/>
    <property type="project" value="RGD"/>
</dbReference>
<dbReference type="GO" id="GO:0035731">
    <property type="term" value="F:dinitrosyl-iron complex binding"/>
    <property type="evidence" value="ECO:0000353"/>
    <property type="project" value="RGD"/>
</dbReference>
<dbReference type="GO" id="GO:0043295">
    <property type="term" value="F:glutathione binding"/>
    <property type="evidence" value="ECO:0000314"/>
    <property type="project" value="CAFA"/>
</dbReference>
<dbReference type="GO" id="GO:0004364">
    <property type="term" value="F:glutathione transferase activity"/>
    <property type="evidence" value="ECO:0000314"/>
    <property type="project" value="CAFA"/>
</dbReference>
<dbReference type="GO" id="GO:0030855">
    <property type="term" value="P:epithelial cell differentiation"/>
    <property type="evidence" value="ECO:0000266"/>
    <property type="project" value="RGD"/>
</dbReference>
<dbReference type="GO" id="GO:0006749">
    <property type="term" value="P:glutathione metabolic process"/>
    <property type="evidence" value="ECO:0000318"/>
    <property type="project" value="GO_Central"/>
</dbReference>
<dbReference type="GO" id="GO:0009617">
    <property type="term" value="P:response to bacterium"/>
    <property type="evidence" value="ECO:0000266"/>
    <property type="project" value="RGD"/>
</dbReference>
<dbReference type="GO" id="GO:0035634">
    <property type="term" value="P:response to stilbenoid"/>
    <property type="evidence" value="ECO:0000266"/>
    <property type="project" value="RGD"/>
</dbReference>
<dbReference type="GO" id="GO:0042178">
    <property type="term" value="P:xenobiotic catabolic process"/>
    <property type="evidence" value="ECO:0000314"/>
    <property type="project" value="CAFA"/>
</dbReference>
<dbReference type="GO" id="GO:0006805">
    <property type="term" value="P:xenobiotic metabolic process"/>
    <property type="evidence" value="ECO:0000318"/>
    <property type="project" value="GO_Central"/>
</dbReference>
<dbReference type="CDD" id="cd03208">
    <property type="entry name" value="GST_C_Alpha"/>
    <property type="match status" value="1"/>
</dbReference>
<dbReference type="CDD" id="cd03077">
    <property type="entry name" value="GST_N_Alpha"/>
    <property type="match status" value="1"/>
</dbReference>
<dbReference type="FunFam" id="1.20.1050.10:FF:000005">
    <property type="entry name" value="Glutathione S-transferase A1"/>
    <property type="match status" value="1"/>
</dbReference>
<dbReference type="Gene3D" id="1.20.1050.10">
    <property type="match status" value="1"/>
</dbReference>
<dbReference type="Gene3D" id="3.40.30.10">
    <property type="entry name" value="Glutaredoxin"/>
    <property type="match status" value="1"/>
</dbReference>
<dbReference type="InterPro" id="IPR010987">
    <property type="entry name" value="Glutathione-S-Trfase_C-like"/>
</dbReference>
<dbReference type="InterPro" id="IPR036282">
    <property type="entry name" value="Glutathione-S-Trfase_C_sf"/>
</dbReference>
<dbReference type="InterPro" id="IPR004045">
    <property type="entry name" value="Glutathione_S-Trfase_N"/>
</dbReference>
<dbReference type="InterPro" id="IPR003080">
    <property type="entry name" value="GST_alpha"/>
</dbReference>
<dbReference type="InterPro" id="IPR004046">
    <property type="entry name" value="GST_C"/>
</dbReference>
<dbReference type="InterPro" id="IPR050213">
    <property type="entry name" value="GST_superfamily"/>
</dbReference>
<dbReference type="InterPro" id="IPR036249">
    <property type="entry name" value="Thioredoxin-like_sf"/>
</dbReference>
<dbReference type="PANTHER" id="PTHR11571">
    <property type="entry name" value="GLUTATHIONE S-TRANSFERASE"/>
    <property type="match status" value="1"/>
</dbReference>
<dbReference type="PANTHER" id="PTHR11571:SF233">
    <property type="entry name" value="GLUTATHIONE S-TRANSFERASE-RELATED"/>
    <property type="match status" value="1"/>
</dbReference>
<dbReference type="Pfam" id="PF00043">
    <property type="entry name" value="GST_C"/>
    <property type="match status" value="1"/>
</dbReference>
<dbReference type="Pfam" id="PF02798">
    <property type="entry name" value="GST_N"/>
    <property type="match status" value="1"/>
</dbReference>
<dbReference type="PRINTS" id="PR01266">
    <property type="entry name" value="GSTRNSFRASEA"/>
</dbReference>
<dbReference type="SFLD" id="SFLDG01205">
    <property type="entry name" value="AMPS.1"/>
    <property type="match status" value="1"/>
</dbReference>
<dbReference type="SFLD" id="SFLDG00363">
    <property type="entry name" value="AMPS_(cytGST):_Alpha-__Mu-__Pi"/>
    <property type="match status" value="1"/>
</dbReference>
<dbReference type="SUPFAM" id="SSF47616">
    <property type="entry name" value="GST C-terminal domain-like"/>
    <property type="match status" value="1"/>
</dbReference>
<dbReference type="SUPFAM" id="SSF52833">
    <property type="entry name" value="Thioredoxin-like"/>
    <property type="match status" value="1"/>
</dbReference>
<dbReference type="PROSITE" id="PS50405">
    <property type="entry name" value="GST_CTER"/>
    <property type="match status" value="1"/>
</dbReference>
<dbReference type="PROSITE" id="PS50404">
    <property type="entry name" value="GST_NTER"/>
    <property type="match status" value="1"/>
</dbReference>
<evidence type="ECO:0000250" key="1">
    <source>
        <dbReference type="UniProtKB" id="P09210"/>
    </source>
</evidence>
<evidence type="ECO:0000250" key="2">
    <source>
        <dbReference type="UniProtKB" id="P10648"/>
    </source>
</evidence>
<evidence type="ECO:0000250" key="3">
    <source>
        <dbReference type="UniProtKB" id="P13745"/>
    </source>
</evidence>
<evidence type="ECO:0000250" key="4">
    <source>
        <dbReference type="UniProtKB" id="P30115"/>
    </source>
</evidence>
<evidence type="ECO:0000250" key="5">
    <source>
        <dbReference type="UniProtKB" id="P30711"/>
    </source>
</evidence>
<evidence type="ECO:0000305" key="6"/>
<evidence type="ECO:0007829" key="7">
    <source>
        <dbReference type="PDB" id="5LD0"/>
    </source>
</evidence>
<accession>P04903</accession>
<accession>Q63715</accession>
<protein>
    <recommendedName>
        <fullName>Glutathione S-transferase alpha-2</fullName>
        <ecNumber evidence="2">2.5.1.18</ecNumber>
    </recommendedName>
    <alternativeName>
        <fullName>GST 1b-1b</fullName>
    </alternativeName>
    <alternativeName>
        <fullName>GST A2-2</fullName>
    </alternativeName>
    <alternativeName>
        <fullName>Glutathione S-transferase Ya-2</fullName>
        <shortName>GST Ya2</shortName>
    </alternativeName>
</protein>
<gene>
    <name type="primary">Gsta2</name>
</gene>
<name>GSTA2_RAT</name>
<keyword id="KW-0002">3D-structure</keyword>
<keyword id="KW-0963">Cytoplasm</keyword>
<keyword id="KW-1185">Reference proteome</keyword>
<keyword id="KW-0808">Transferase</keyword>
<feature type="chain" id="PRO_0000185793" description="Glutathione S-transferase alpha-2">
    <location>
        <begin position="1"/>
        <end position="222"/>
    </location>
</feature>
<feature type="domain" description="GST N-terminal">
    <location>
        <begin position="3"/>
        <end position="83"/>
    </location>
</feature>
<feature type="domain" description="GST C-terminal">
    <location>
        <begin position="85"/>
        <end position="208"/>
    </location>
</feature>
<feature type="binding site" evidence="3">
    <location>
        <position position="9"/>
    </location>
    <ligand>
        <name>glutathione</name>
        <dbReference type="ChEBI" id="CHEBI:57925"/>
    </ligand>
</feature>
<feature type="binding site" evidence="3">
    <location>
        <position position="45"/>
    </location>
    <ligand>
        <name>glutathione</name>
        <dbReference type="ChEBI" id="CHEBI:57925"/>
    </ligand>
</feature>
<feature type="binding site" evidence="5">
    <location>
        <begin position="54"/>
        <end position="55"/>
    </location>
    <ligand>
        <name>glutathione</name>
        <dbReference type="ChEBI" id="CHEBI:57925"/>
    </ligand>
</feature>
<feature type="binding site" evidence="3">
    <location>
        <begin position="67"/>
        <end position="68"/>
    </location>
    <ligand>
        <name>glutathione</name>
        <dbReference type="ChEBI" id="CHEBI:57925"/>
    </ligand>
</feature>
<feature type="modified residue" description="N6-succinyllysine" evidence="4">
    <location>
        <position position="4"/>
    </location>
</feature>
<feature type="helix" evidence="7">
    <location>
        <begin position="86"/>
        <end position="111"/>
    </location>
</feature>
<feature type="helix" evidence="7">
    <location>
        <begin position="114"/>
        <end position="130"/>
    </location>
</feature>
<feature type="helix" evidence="7">
    <location>
        <begin position="132"/>
        <end position="143"/>
    </location>
</feature>
<feature type="strand" evidence="7">
    <location>
        <begin position="146"/>
        <end position="149"/>
    </location>
</feature>
<feature type="helix" evidence="7">
    <location>
        <begin position="155"/>
        <end position="171"/>
    </location>
</feature>
<feature type="helix" evidence="7">
    <location>
        <begin position="172"/>
        <end position="175"/>
    </location>
</feature>
<feature type="helix" evidence="7">
    <location>
        <begin position="179"/>
        <end position="189"/>
    </location>
</feature>
<feature type="helix" evidence="7">
    <location>
        <begin position="192"/>
        <end position="198"/>
    </location>
</feature>